<comment type="function">
    <text evidence="1">May play a role in maintenance of cell cycle integrity by regulating mitosis or cytokinesis.</text>
</comment>
<comment type="subunit">
    <text evidence="1">Interacts with PLK1; phosphorylation-dependent.</text>
</comment>
<comment type="subcellular location">
    <subcellularLocation>
        <location>Nucleus</location>
    </subcellularLocation>
    <subcellularLocation>
        <location>Cytoplasm</location>
    </subcellularLocation>
    <subcellularLocation>
        <location evidence="1">Cytoplasm</location>
        <location evidence="1">Cytoskeleton</location>
        <location evidence="1">Microtubule organizing center</location>
        <location evidence="1">Centrosome</location>
    </subcellularLocation>
    <text>The subcellular location is regulated during cell cycle. During interphase located in the nucleus. During mitosis located at the centrosome and dispersed in the cytoplasm. During telophase located in the midbody. Colocalizes with PLK1 at the centrosome in M phase.</text>
</comment>
<comment type="PTM">
    <text evidence="1">Phosphorylated during mitosis in the cell cycle probably by CDK1.</text>
</comment>
<organism>
    <name type="scientific">Mus musculus</name>
    <name type="common">Mouse</name>
    <dbReference type="NCBI Taxonomy" id="10090"/>
    <lineage>
        <taxon>Eukaryota</taxon>
        <taxon>Metazoa</taxon>
        <taxon>Chordata</taxon>
        <taxon>Craniata</taxon>
        <taxon>Vertebrata</taxon>
        <taxon>Euteleostomi</taxon>
        <taxon>Mammalia</taxon>
        <taxon>Eutheria</taxon>
        <taxon>Euarchontoglires</taxon>
        <taxon>Glires</taxon>
        <taxon>Rodentia</taxon>
        <taxon>Myomorpha</taxon>
        <taxon>Muroidea</taxon>
        <taxon>Muridae</taxon>
        <taxon>Murinae</taxon>
        <taxon>Mus</taxon>
        <taxon>Mus</taxon>
    </lineage>
</organism>
<proteinExistence type="evidence at protein level"/>
<keyword id="KW-0131">Cell cycle</keyword>
<keyword id="KW-0132">Cell division</keyword>
<keyword id="KW-0963">Cytoplasm</keyword>
<keyword id="KW-0206">Cytoskeleton</keyword>
<keyword id="KW-0488">Methylation</keyword>
<keyword id="KW-0498">Mitosis</keyword>
<keyword id="KW-0539">Nucleus</keyword>
<keyword id="KW-0597">Phosphoprotein</keyword>
<keyword id="KW-1185">Reference proteome</keyword>
<protein>
    <recommendedName>
        <fullName>M-phase-specific PLK1-interacting protein</fullName>
    </recommendedName>
    <alternativeName>
        <fullName>TTD non-photosensitive 1 protein homolog</fullName>
    </alternativeName>
</protein>
<accession>Q9D011</accession>
<name>MPLKI_MOUSE</name>
<gene>
    <name type="primary">Mplkip</name>
    <name type="synonym">Ttdn1</name>
</gene>
<evidence type="ECO:0000250" key="1"/>
<evidence type="ECO:0000250" key="2">
    <source>
        <dbReference type="UniProtKB" id="Q8TAP9"/>
    </source>
</evidence>
<evidence type="ECO:0000256" key="3">
    <source>
        <dbReference type="SAM" id="MobiDB-lite"/>
    </source>
</evidence>
<evidence type="ECO:0007744" key="4">
    <source>
    </source>
</evidence>
<dbReference type="EMBL" id="AK011919">
    <property type="protein sequence ID" value="BAB27916.1"/>
    <property type="molecule type" value="mRNA"/>
</dbReference>
<dbReference type="EMBL" id="AK030630">
    <property type="protein sequence ID" value="BAC27054.1"/>
    <property type="molecule type" value="mRNA"/>
</dbReference>
<dbReference type="CCDS" id="CCDS26253.1"/>
<dbReference type="RefSeq" id="NP_079755.1">
    <property type="nucleotide sequence ID" value="NM_025479.6"/>
</dbReference>
<dbReference type="FunCoup" id="Q9D011">
    <property type="interactions" value="2586"/>
</dbReference>
<dbReference type="STRING" id="10090.ENSMUSP00000059154"/>
<dbReference type="iPTMnet" id="Q9D011"/>
<dbReference type="PhosphoSitePlus" id="Q9D011"/>
<dbReference type="jPOST" id="Q9D011"/>
<dbReference type="PaxDb" id="10090-ENSMUSP00000059154"/>
<dbReference type="ProteomicsDB" id="291488"/>
<dbReference type="Pumba" id="Q9D011"/>
<dbReference type="DNASU" id="66308"/>
<dbReference type="Ensembl" id="ENSMUST00000049744.4">
    <property type="protein sequence ID" value="ENSMUSP00000059154.4"/>
    <property type="gene ID" value="ENSMUSG00000012429.10"/>
</dbReference>
<dbReference type="GeneID" id="66308"/>
<dbReference type="KEGG" id="mmu:66308"/>
<dbReference type="UCSC" id="uc007poa.1">
    <property type="organism name" value="mouse"/>
</dbReference>
<dbReference type="AGR" id="MGI:1913558"/>
<dbReference type="CTD" id="136647"/>
<dbReference type="MGI" id="MGI:1913558">
    <property type="gene designation" value="Mplkip"/>
</dbReference>
<dbReference type="VEuPathDB" id="HostDB:ENSMUSG00000012429"/>
<dbReference type="eggNOG" id="ENOG502S6ND">
    <property type="taxonomic scope" value="Eukaryota"/>
</dbReference>
<dbReference type="GeneTree" id="ENSGT00390000002582"/>
<dbReference type="HOGENOM" id="CLU_1510143_0_0_1"/>
<dbReference type="InParanoid" id="Q9D011"/>
<dbReference type="OMA" id="QTTCTGK"/>
<dbReference type="OrthoDB" id="6086265at2759"/>
<dbReference type="PhylomeDB" id="Q9D011"/>
<dbReference type="TreeFam" id="TF335586"/>
<dbReference type="BioGRID-ORCS" id="66308">
    <property type="hits" value="7 hits in 78 CRISPR screens"/>
</dbReference>
<dbReference type="PRO" id="PR:Q9D011"/>
<dbReference type="Proteomes" id="UP000000589">
    <property type="component" value="Chromosome 13"/>
</dbReference>
<dbReference type="RNAct" id="Q9D011">
    <property type="molecule type" value="protein"/>
</dbReference>
<dbReference type="Bgee" id="ENSMUSG00000012429">
    <property type="expression patterns" value="Expressed in ventricular zone and 204 other cell types or tissues"/>
</dbReference>
<dbReference type="ExpressionAtlas" id="Q9D011">
    <property type="expression patterns" value="baseline and differential"/>
</dbReference>
<dbReference type="GO" id="GO:0005813">
    <property type="term" value="C:centrosome"/>
    <property type="evidence" value="ECO:0000250"/>
    <property type="project" value="UniProtKB"/>
</dbReference>
<dbReference type="GO" id="GO:0005737">
    <property type="term" value="C:cytoplasm"/>
    <property type="evidence" value="ECO:0000250"/>
    <property type="project" value="UniProtKB"/>
</dbReference>
<dbReference type="GO" id="GO:0030496">
    <property type="term" value="C:midbody"/>
    <property type="evidence" value="ECO:0000250"/>
    <property type="project" value="UniProtKB"/>
</dbReference>
<dbReference type="GO" id="GO:0005634">
    <property type="term" value="C:nucleus"/>
    <property type="evidence" value="ECO:0000250"/>
    <property type="project" value="UniProtKB"/>
</dbReference>
<dbReference type="GO" id="GO:0051301">
    <property type="term" value="P:cell division"/>
    <property type="evidence" value="ECO:0007669"/>
    <property type="project" value="UniProtKB-KW"/>
</dbReference>
<dbReference type="InterPro" id="IPR026618">
    <property type="entry name" value="MPLKIP-like_vertebrate"/>
</dbReference>
<dbReference type="InterPro" id="IPR028265">
    <property type="entry name" value="TTDN1/SICKLE"/>
</dbReference>
<dbReference type="PANTHER" id="PTHR22446">
    <property type="entry name" value="M-PHASE-SPECIFIC PLK1-INTERACTING PROTEIN"/>
    <property type="match status" value="1"/>
</dbReference>
<dbReference type="PANTHER" id="PTHR22446:SF3">
    <property type="entry name" value="M-PHASE-SPECIFIC PLK1-INTERACTING PROTEIN"/>
    <property type="match status" value="1"/>
</dbReference>
<dbReference type="Pfam" id="PF15502">
    <property type="entry name" value="MPLKIP"/>
    <property type="match status" value="1"/>
</dbReference>
<sequence>MHRPNFRPPTPPYPSPGIGGWGGGNNFRGALGGGPRPPSPRDGYGSPHHTPPCGPRARPYGSSQSPRHGGNFSGARFGSPSPGGYPGSYSRSPAGSQHQFGYSPGQQQTYPQGSPRTSTPFGSGRGREKRMSNELESYFKPSMLEDPWAGLEPVSVVDISQQYSNTQTFTGKKGRYFS</sequence>
<feature type="chain" id="PRO_0000065675" description="M-phase-specific PLK1-interacting protein">
    <location>
        <begin position="1"/>
        <end position="178"/>
    </location>
</feature>
<feature type="region of interest" description="Disordered" evidence="3">
    <location>
        <begin position="1"/>
        <end position="134"/>
    </location>
</feature>
<feature type="compositionally biased region" description="Pro residues" evidence="3">
    <location>
        <begin position="1"/>
        <end position="15"/>
    </location>
</feature>
<feature type="compositionally biased region" description="Gly residues" evidence="3">
    <location>
        <begin position="17"/>
        <end position="34"/>
    </location>
</feature>
<feature type="compositionally biased region" description="Low complexity" evidence="3">
    <location>
        <begin position="78"/>
        <end position="96"/>
    </location>
</feature>
<feature type="compositionally biased region" description="Polar residues" evidence="3">
    <location>
        <begin position="97"/>
        <end position="121"/>
    </location>
</feature>
<feature type="modified residue" description="Asymmetric dimethylarginine" evidence="4">
    <location>
        <position position="36"/>
    </location>
</feature>
<feature type="modified residue" description="Phosphoserine" evidence="2">
    <location>
        <position position="39"/>
    </location>
</feature>
<feature type="modified residue" description="Phosphoserine" evidence="2">
    <location>
        <position position="46"/>
    </location>
</feature>
<feature type="modified residue" description="Phosphothreonine" evidence="2">
    <location>
        <position position="50"/>
    </location>
</feature>
<feature type="modified residue" description="Omega-N-methylarginine" evidence="2">
    <location>
        <position position="56"/>
    </location>
</feature>
<feature type="modified residue" description="Asymmetric dimethylarginine" evidence="4">
    <location>
        <position position="58"/>
    </location>
</feature>
<feature type="modified residue" description="Asymmetric dimethylarginine" evidence="4">
    <location>
        <position position="67"/>
    </location>
</feature>
<feature type="modified residue" description="Asymmetric dimethylarginine" evidence="4">
    <location>
        <position position="76"/>
    </location>
</feature>
<feature type="modified residue" description="Phosphoserine" evidence="2">
    <location>
        <position position="79"/>
    </location>
</feature>
<feature type="modified residue" description="Phosphoserine" evidence="2">
    <location>
        <position position="81"/>
    </location>
</feature>
<feature type="modified residue" description="Phosphoserine" evidence="2">
    <location>
        <position position="92"/>
    </location>
</feature>
<feature type="modified residue" description="Phosphoserine" evidence="2">
    <location>
        <position position="103"/>
    </location>
</feature>
<feature type="modified residue" description="Phosphoserine" evidence="2">
    <location>
        <position position="114"/>
    </location>
</feature>
<feature type="modified residue" description="Omega-N-methylarginine" evidence="2">
    <location>
        <position position="116"/>
    </location>
</feature>
<feature type="modified residue" description="Phosphothreonine" evidence="2">
    <location>
        <position position="119"/>
    </location>
</feature>
<feature type="modified residue" description="Phosphoserine" evidence="2">
    <location>
        <position position="123"/>
    </location>
</feature>
<feature type="modified residue" description="Phosphoserine" evidence="2">
    <location>
        <position position="132"/>
    </location>
</feature>
<reference key="1">
    <citation type="journal article" date="2005" name="Science">
        <title>The transcriptional landscape of the mammalian genome.</title>
        <authorList>
            <person name="Carninci P."/>
            <person name="Kasukawa T."/>
            <person name="Katayama S."/>
            <person name="Gough J."/>
            <person name="Frith M.C."/>
            <person name="Maeda N."/>
            <person name="Oyama R."/>
            <person name="Ravasi T."/>
            <person name="Lenhard B."/>
            <person name="Wells C."/>
            <person name="Kodzius R."/>
            <person name="Shimokawa K."/>
            <person name="Bajic V.B."/>
            <person name="Brenner S.E."/>
            <person name="Batalov S."/>
            <person name="Forrest A.R."/>
            <person name="Zavolan M."/>
            <person name="Davis M.J."/>
            <person name="Wilming L.G."/>
            <person name="Aidinis V."/>
            <person name="Allen J.E."/>
            <person name="Ambesi-Impiombato A."/>
            <person name="Apweiler R."/>
            <person name="Aturaliya R.N."/>
            <person name="Bailey T.L."/>
            <person name="Bansal M."/>
            <person name="Baxter L."/>
            <person name="Beisel K.W."/>
            <person name="Bersano T."/>
            <person name="Bono H."/>
            <person name="Chalk A.M."/>
            <person name="Chiu K.P."/>
            <person name="Choudhary V."/>
            <person name="Christoffels A."/>
            <person name="Clutterbuck D.R."/>
            <person name="Crowe M.L."/>
            <person name="Dalla E."/>
            <person name="Dalrymple B.P."/>
            <person name="de Bono B."/>
            <person name="Della Gatta G."/>
            <person name="di Bernardo D."/>
            <person name="Down T."/>
            <person name="Engstrom P."/>
            <person name="Fagiolini M."/>
            <person name="Faulkner G."/>
            <person name="Fletcher C.F."/>
            <person name="Fukushima T."/>
            <person name="Furuno M."/>
            <person name="Futaki S."/>
            <person name="Gariboldi M."/>
            <person name="Georgii-Hemming P."/>
            <person name="Gingeras T.R."/>
            <person name="Gojobori T."/>
            <person name="Green R.E."/>
            <person name="Gustincich S."/>
            <person name="Harbers M."/>
            <person name="Hayashi Y."/>
            <person name="Hensch T.K."/>
            <person name="Hirokawa N."/>
            <person name="Hill D."/>
            <person name="Huminiecki L."/>
            <person name="Iacono M."/>
            <person name="Ikeo K."/>
            <person name="Iwama A."/>
            <person name="Ishikawa T."/>
            <person name="Jakt M."/>
            <person name="Kanapin A."/>
            <person name="Katoh M."/>
            <person name="Kawasawa Y."/>
            <person name="Kelso J."/>
            <person name="Kitamura H."/>
            <person name="Kitano H."/>
            <person name="Kollias G."/>
            <person name="Krishnan S.P."/>
            <person name="Kruger A."/>
            <person name="Kummerfeld S.K."/>
            <person name="Kurochkin I.V."/>
            <person name="Lareau L.F."/>
            <person name="Lazarevic D."/>
            <person name="Lipovich L."/>
            <person name="Liu J."/>
            <person name="Liuni S."/>
            <person name="McWilliam S."/>
            <person name="Madan Babu M."/>
            <person name="Madera M."/>
            <person name="Marchionni L."/>
            <person name="Matsuda H."/>
            <person name="Matsuzawa S."/>
            <person name="Miki H."/>
            <person name="Mignone F."/>
            <person name="Miyake S."/>
            <person name="Morris K."/>
            <person name="Mottagui-Tabar S."/>
            <person name="Mulder N."/>
            <person name="Nakano N."/>
            <person name="Nakauchi H."/>
            <person name="Ng P."/>
            <person name="Nilsson R."/>
            <person name="Nishiguchi S."/>
            <person name="Nishikawa S."/>
            <person name="Nori F."/>
            <person name="Ohara O."/>
            <person name="Okazaki Y."/>
            <person name="Orlando V."/>
            <person name="Pang K.C."/>
            <person name="Pavan W.J."/>
            <person name="Pavesi G."/>
            <person name="Pesole G."/>
            <person name="Petrovsky N."/>
            <person name="Piazza S."/>
            <person name="Reed J."/>
            <person name="Reid J.F."/>
            <person name="Ring B.Z."/>
            <person name="Ringwald M."/>
            <person name="Rost B."/>
            <person name="Ruan Y."/>
            <person name="Salzberg S.L."/>
            <person name="Sandelin A."/>
            <person name="Schneider C."/>
            <person name="Schoenbach C."/>
            <person name="Sekiguchi K."/>
            <person name="Semple C.A."/>
            <person name="Seno S."/>
            <person name="Sessa L."/>
            <person name="Sheng Y."/>
            <person name="Shibata Y."/>
            <person name="Shimada H."/>
            <person name="Shimada K."/>
            <person name="Silva D."/>
            <person name="Sinclair B."/>
            <person name="Sperling S."/>
            <person name="Stupka E."/>
            <person name="Sugiura K."/>
            <person name="Sultana R."/>
            <person name="Takenaka Y."/>
            <person name="Taki K."/>
            <person name="Tammoja K."/>
            <person name="Tan S.L."/>
            <person name="Tang S."/>
            <person name="Taylor M.S."/>
            <person name="Tegner J."/>
            <person name="Teichmann S.A."/>
            <person name="Ueda H.R."/>
            <person name="van Nimwegen E."/>
            <person name="Verardo R."/>
            <person name="Wei C.L."/>
            <person name="Yagi K."/>
            <person name="Yamanishi H."/>
            <person name="Zabarovsky E."/>
            <person name="Zhu S."/>
            <person name="Zimmer A."/>
            <person name="Hide W."/>
            <person name="Bult C."/>
            <person name="Grimmond S.M."/>
            <person name="Teasdale R.D."/>
            <person name="Liu E.T."/>
            <person name="Brusic V."/>
            <person name="Quackenbush J."/>
            <person name="Wahlestedt C."/>
            <person name="Mattick J.S."/>
            <person name="Hume D.A."/>
            <person name="Kai C."/>
            <person name="Sasaki D."/>
            <person name="Tomaru Y."/>
            <person name="Fukuda S."/>
            <person name="Kanamori-Katayama M."/>
            <person name="Suzuki M."/>
            <person name="Aoki J."/>
            <person name="Arakawa T."/>
            <person name="Iida J."/>
            <person name="Imamura K."/>
            <person name="Itoh M."/>
            <person name="Kato T."/>
            <person name="Kawaji H."/>
            <person name="Kawagashira N."/>
            <person name="Kawashima T."/>
            <person name="Kojima M."/>
            <person name="Kondo S."/>
            <person name="Konno H."/>
            <person name="Nakano K."/>
            <person name="Ninomiya N."/>
            <person name="Nishio T."/>
            <person name="Okada M."/>
            <person name="Plessy C."/>
            <person name="Shibata K."/>
            <person name="Shiraki T."/>
            <person name="Suzuki S."/>
            <person name="Tagami M."/>
            <person name="Waki K."/>
            <person name="Watahiki A."/>
            <person name="Okamura-Oho Y."/>
            <person name="Suzuki H."/>
            <person name="Kawai J."/>
            <person name="Hayashizaki Y."/>
        </authorList>
    </citation>
    <scope>NUCLEOTIDE SEQUENCE [LARGE SCALE MRNA]</scope>
    <source>
        <strain>C57BL/6J</strain>
        <tissue>Embryo</tissue>
        <tissue>Pituitary</tissue>
    </source>
</reference>
<reference key="2">
    <citation type="journal article" date="2014" name="Mol. Cell. Proteomics">
        <title>Immunoaffinity enrichment and mass spectrometry analysis of protein methylation.</title>
        <authorList>
            <person name="Guo A."/>
            <person name="Gu H."/>
            <person name="Zhou J."/>
            <person name="Mulhern D."/>
            <person name="Wang Y."/>
            <person name="Lee K.A."/>
            <person name="Yang V."/>
            <person name="Aguiar M."/>
            <person name="Kornhauser J."/>
            <person name="Jia X."/>
            <person name="Ren J."/>
            <person name="Beausoleil S.A."/>
            <person name="Silva J.C."/>
            <person name="Vemulapalli V."/>
            <person name="Bedford M.T."/>
            <person name="Comb M.J."/>
        </authorList>
    </citation>
    <scope>METHYLATION [LARGE SCALE ANALYSIS] AT ARG-36; ARG-58; ARG-67 AND ARG-76</scope>
    <scope>IDENTIFICATION BY MASS SPECTROMETRY [LARGE SCALE ANALYSIS]</scope>
    <source>
        <tissue>Brain</tissue>
        <tissue>Embryo</tissue>
    </source>
</reference>